<evidence type="ECO:0000250" key="1"/>
<evidence type="ECO:0000305" key="2"/>
<protein>
    <recommendedName>
        <fullName>Mannosyl-3-phosphoglycerate synthase</fullName>
        <shortName>MPG synthase</shortName>
        <shortName>MPGS</shortName>
        <ecNumber>2.4.1.217</ecNumber>
    </recommendedName>
</protein>
<comment type="function">
    <text evidence="1">Transfers a mannosyl group from GDP-mannose to phosphoglycerate to form mannosyl-3-phosphoglycerate (MPG).</text>
</comment>
<comment type="catalytic activity">
    <reaction>
        <text>(2R)-3-phosphoglycerate + GDP-alpha-D-mannose = 2-O-(alpha-D-mannosyl)-3-phosphoglycerate + GDP + H(+)</text>
        <dbReference type="Rhea" id="RHEA:13537"/>
        <dbReference type="ChEBI" id="CHEBI:15378"/>
        <dbReference type="ChEBI" id="CHEBI:57527"/>
        <dbReference type="ChEBI" id="CHEBI:57744"/>
        <dbReference type="ChEBI" id="CHEBI:58189"/>
        <dbReference type="ChEBI" id="CHEBI:58272"/>
        <dbReference type="EC" id="2.4.1.217"/>
    </reaction>
</comment>
<comment type="pathway">
    <text>Carbohydrate biosynthesis; 2-(alpha-D-mannosyl)-D-glycerate biosynthesis; 2-(alpha-D-mannosyl)-D-glycerate from GDP-alpha-D-mannose (MPG route): step 1/2.</text>
</comment>
<comment type="subcellular location">
    <subcellularLocation>
        <location evidence="1">Cytoplasm</location>
    </subcellularLocation>
</comment>
<comment type="similarity">
    <text evidence="2">Belongs to the glycosyltransferase 2 family.</text>
</comment>
<keyword id="KW-0963">Cytoplasm</keyword>
<keyword id="KW-0328">Glycosyltransferase</keyword>
<keyword id="KW-1185">Reference proteome</keyword>
<keyword id="KW-0808">Transferase</keyword>
<accession>Q8U380</accession>
<proteinExistence type="inferred from homology"/>
<feature type="chain" id="PRO_0000059286" description="Mannosyl-3-phosphoglycerate synthase">
    <location>
        <begin position="1"/>
        <end position="394"/>
    </location>
</feature>
<organism>
    <name type="scientific">Pyrococcus furiosus (strain ATCC 43587 / DSM 3638 / JCM 8422 / Vc1)</name>
    <dbReference type="NCBI Taxonomy" id="186497"/>
    <lineage>
        <taxon>Archaea</taxon>
        <taxon>Methanobacteriati</taxon>
        <taxon>Methanobacteriota</taxon>
        <taxon>Thermococci</taxon>
        <taxon>Thermococcales</taxon>
        <taxon>Thermococcaceae</taxon>
        <taxon>Pyrococcus</taxon>
    </lineage>
</organism>
<sequence length="394" mass="45426">MLLEAPVYKEIFGAVKIYELQKVIKLDTETEDVPVYTITNIPREKIYDTLGKMAVIVPMKNEKLHLVDGVLKAIPHKCPIIIVSNSKREGPNRYRLEVDLVRHFYNLTNSKIIMVHQRDPGLAKAFQKVGYTDILDEKGNIRSGKGEGMLIGILLAKAIGAEYVGFVDADNYIPGAVNEYVKDYAAGFLMSESDYTMVRLHWRHKPKVTKGTLYFKKWGRVSEITNHYLNMLISEQTSFETTIMVTGNAGEHAMTMKLAEIMPFSTNYSIEPYEIVYLLERFGKWENVEEFKDVFDQGIEIFQIETLNPHFHEDKGQEHVREMILLSLATIYHSKMASKNLKRRILNDLIEHGILKEGEEPPKLRIMRPINEIDIEEWMKVVENNSETLLRFGL</sequence>
<name>MPGS_PYRFU</name>
<reference key="1">
    <citation type="journal article" date="1999" name="Genetics">
        <title>Divergence of the hyperthermophilic archaea Pyrococcus furiosus and P. horikoshii inferred from complete genomic sequences.</title>
        <authorList>
            <person name="Maeder D.L."/>
            <person name="Weiss R.B."/>
            <person name="Dunn D.M."/>
            <person name="Cherry J.L."/>
            <person name="Gonzalez J.M."/>
            <person name="DiRuggiero J."/>
            <person name="Robb F.T."/>
        </authorList>
    </citation>
    <scope>NUCLEOTIDE SEQUENCE [LARGE SCALE GENOMIC DNA]</scope>
    <source>
        <strain>ATCC 43587 / DSM 3638 / JCM 8422 / Vc1</strain>
    </source>
</reference>
<dbReference type="EC" id="2.4.1.217"/>
<dbReference type="EMBL" id="AE009950">
    <property type="protein sequence ID" value="AAL80715.1"/>
    <property type="molecule type" value="Genomic_DNA"/>
</dbReference>
<dbReference type="SMR" id="Q8U380"/>
<dbReference type="STRING" id="186497.PF0591"/>
<dbReference type="CAZy" id="GT55">
    <property type="family name" value="Glycosyltransferase Family 55"/>
</dbReference>
<dbReference type="PaxDb" id="186497-PF0591"/>
<dbReference type="KEGG" id="pfu:PF0591"/>
<dbReference type="PATRIC" id="fig|186497.12.peg.620"/>
<dbReference type="eggNOG" id="arCOG04158">
    <property type="taxonomic scope" value="Archaea"/>
</dbReference>
<dbReference type="HOGENOM" id="CLU_028916_0_0_2"/>
<dbReference type="OrthoDB" id="9468at2157"/>
<dbReference type="PhylomeDB" id="Q8U380"/>
<dbReference type="UniPathway" id="UPA00130">
    <property type="reaction ID" value="UER00192"/>
</dbReference>
<dbReference type="Proteomes" id="UP000001013">
    <property type="component" value="Chromosome"/>
</dbReference>
<dbReference type="GO" id="GO:0005737">
    <property type="term" value="C:cytoplasm"/>
    <property type="evidence" value="ECO:0007669"/>
    <property type="project" value="UniProtKB-SubCell"/>
</dbReference>
<dbReference type="GO" id="GO:0050504">
    <property type="term" value="F:mannosyl-3-phosphoglycerate synthase activity"/>
    <property type="evidence" value="ECO:0007669"/>
    <property type="project" value="UniProtKB-EC"/>
</dbReference>
<dbReference type="GO" id="GO:0051479">
    <property type="term" value="P:mannosylglycerate biosynthetic process"/>
    <property type="evidence" value="ECO:0007669"/>
    <property type="project" value="UniProtKB-UniPathway"/>
</dbReference>
<dbReference type="CDD" id="cd00761">
    <property type="entry name" value="Glyco_tranf_GTA_type"/>
    <property type="match status" value="1"/>
</dbReference>
<dbReference type="Gene3D" id="3.90.550.10">
    <property type="entry name" value="Spore Coat Polysaccharide Biosynthesis Protein SpsA, Chain A"/>
    <property type="match status" value="1"/>
</dbReference>
<dbReference type="InterPro" id="IPR029044">
    <property type="entry name" value="Nucleotide-diphossugar_trans"/>
</dbReference>
<dbReference type="InterPro" id="IPR012812">
    <property type="entry name" value="Osmo_MPG_synth"/>
</dbReference>
<dbReference type="NCBIfam" id="TIGR02460">
    <property type="entry name" value="osmo_MPGsynth"/>
    <property type="match status" value="1"/>
</dbReference>
<dbReference type="Pfam" id="PF09488">
    <property type="entry name" value="Osmo_MPGsynth"/>
    <property type="match status" value="1"/>
</dbReference>
<dbReference type="SUPFAM" id="SSF53448">
    <property type="entry name" value="Nucleotide-diphospho-sugar transferases"/>
    <property type="match status" value="1"/>
</dbReference>
<gene>
    <name type="primary">mngA</name>
    <name type="ordered locus">PF0591</name>
</gene>